<evidence type="ECO:0000250" key="1"/>
<evidence type="ECO:0000255" key="2"/>
<evidence type="ECO:0000255" key="3">
    <source>
        <dbReference type="PROSITE-ProRule" id="PRU00609"/>
    </source>
</evidence>
<evidence type="ECO:0000256" key="4">
    <source>
        <dbReference type="SAM" id="MobiDB-lite"/>
    </source>
</evidence>
<evidence type="ECO:0000269" key="5">
    <source>
    </source>
</evidence>
<evidence type="ECO:0000269" key="6">
    <source>
    </source>
</evidence>
<evidence type="ECO:0000269" key="7">
    <source>
    </source>
</evidence>
<evidence type="ECO:0000269" key="8">
    <source>
    </source>
</evidence>
<evidence type="ECO:0000305" key="9"/>
<proteinExistence type="evidence at transcript level"/>
<dbReference type="EC" id="1.4.1.14"/>
<dbReference type="EMBL" id="AB008845">
    <property type="protein sequence ID" value="BAA35120.1"/>
    <property type="molecule type" value="mRNA"/>
</dbReference>
<dbReference type="EMBL" id="AP008207">
    <property type="protein sequence ID" value="BAF05798.1"/>
    <property type="molecule type" value="Genomic_DNA"/>
</dbReference>
<dbReference type="EMBL" id="AP014957">
    <property type="status" value="NOT_ANNOTATED_CDS"/>
    <property type="molecule type" value="Genomic_DNA"/>
</dbReference>
<dbReference type="SMR" id="Q0JKD0"/>
<dbReference type="FunCoup" id="Q0JKD0">
    <property type="interactions" value="1476"/>
</dbReference>
<dbReference type="STRING" id="39947.Q0JKD0"/>
<dbReference type="PaxDb" id="39947-Q0JKD0"/>
<dbReference type="EnsemblPlants" id="Os01t0681900-01">
    <property type="protein sequence ID" value="Os01t0681900-01"/>
    <property type="gene ID" value="Os01g0681900"/>
</dbReference>
<dbReference type="Gramene" id="Os01t0681900-01">
    <property type="protein sequence ID" value="Os01t0681900-01"/>
    <property type="gene ID" value="Os01g0681900"/>
</dbReference>
<dbReference type="KEGG" id="dosa:Os01g0681900"/>
<dbReference type="KEGG" id="osa:4324398"/>
<dbReference type="eggNOG" id="KOG0399">
    <property type="taxonomic scope" value="Eukaryota"/>
</dbReference>
<dbReference type="HOGENOM" id="CLU_000422_5_3_1"/>
<dbReference type="InParanoid" id="Q0JKD0"/>
<dbReference type="OrthoDB" id="4327079at2759"/>
<dbReference type="BRENDA" id="1.4.1.14">
    <property type="organism ID" value="8948"/>
</dbReference>
<dbReference type="PlantReactome" id="R-OSA-1119443">
    <property type="pathway name" value="Ammonia assimilation cycle"/>
</dbReference>
<dbReference type="PlantReactome" id="R-OSA-1119535">
    <property type="pathway name" value="Glutamate biosynthesis IV"/>
</dbReference>
<dbReference type="UniPathway" id="UPA00045"/>
<dbReference type="UniPathway" id="UPA00634">
    <property type="reaction ID" value="UER00690"/>
</dbReference>
<dbReference type="Proteomes" id="UP000000763">
    <property type="component" value="Chromosome 1"/>
</dbReference>
<dbReference type="Proteomes" id="UP000059680">
    <property type="component" value="Chromosome 1"/>
</dbReference>
<dbReference type="GO" id="GO:0009507">
    <property type="term" value="C:chloroplast"/>
    <property type="evidence" value="ECO:0007669"/>
    <property type="project" value="UniProtKB-SubCell"/>
</dbReference>
<dbReference type="GO" id="GO:0009536">
    <property type="term" value="C:plastid"/>
    <property type="evidence" value="ECO:0000314"/>
    <property type="project" value="UniProtKB"/>
</dbReference>
<dbReference type="GO" id="GO:0051538">
    <property type="term" value="F:3 iron, 4 sulfur cluster binding"/>
    <property type="evidence" value="ECO:0007669"/>
    <property type="project" value="UniProtKB-KW"/>
</dbReference>
<dbReference type="GO" id="GO:0050660">
    <property type="term" value="F:flavin adenine dinucleotide binding"/>
    <property type="evidence" value="ECO:0007669"/>
    <property type="project" value="InterPro"/>
</dbReference>
<dbReference type="GO" id="GO:0010181">
    <property type="term" value="F:FMN binding"/>
    <property type="evidence" value="ECO:0007669"/>
    <property type="project" value="InterPro"/>
</dbReference>
<dbReference type="GO" id="GO:0016040">
    <property type="term" value="F:glutamate synthase (NADH) activity"/>
    <property type="evidence" value="ECO:0000318"/>
    <property type="project" value="GO_Central"/>
</dbReference>
<dbReference type="GO" id="GO:0005506">
    <property type="term" value="F:iron ion binding"/>
    <property type="evidence" value="ECO:0007669"/>
    <property type="project" value="InterPro"/>
</dbReference>
<dbReference type="GO" id="GO:0016639">
    <property type="term" value="F:oxidoreductase activity, acting on the CH-NH2 group of donors, NAD or NADP as acceptor"/>
    <property type="evidence" value="ECO:0007669"/>
    <property type="project" value="InterPro"/>
</dbReference>
<dbReference type="GO" id="GO:0019676">
    <property type="term" value="P:ammonia assimilation cycle"/>
    <property type="evidence" value="ECO:0000315"/>
    <property type="project" value="UniProtKB"/>
</dbReference>
<dbReference type="GO" id="GO:0048589">
    <property type="term" value="P:developmental growth"/>
    <property type="evidence" value="ECO:0000315"/>
    <property type="project" value="UniProtKB"/>
</dbReference>
<dbReference type="GO" id="GO:0006537">
    <property type="term" value="P:glutamate biosynthetic process"/>
    <property type="evidence" value="ECO:0000315"/>
    <property type="project" value="UniProtKB"/>
</dbReference>
<dbReference type="GO" id="GO:0097054">
    <property type="term" value="P:L-glutamate biosynthetic process"/>
    <property type="evidence" value="ECO:0007669"/>
    <property type="project" value="UniProtKB-UniPathway"/>
</dbReference>
<dbReference type="GO" id="GO:0060359">
    <property type="term" value="P:response to ammonium ion"/>
    <property type="evidence" value="ECO:0000270"/>
    <property type="project" value="UniProtKB"/>
</dbReference>
<dbReference type="CDD" id="cd00982">
    <property type="entry name" value="gltB_C"/>
    <property type="match status" value="1"/>
</dbReference>
<dbReference type="CDD" id="cd00713">
    <property type="entry name" value="GltS"/>
    <property type="match status" value="1"/>
</dbReference>
<dbReference type="CDD" id="cd02808">
    <property type="entry name" value="GltS_FMN"/>
    <property type="match status" value="1"/>
</dbReference>
<dbReference type="FunFam" id="3.20.20.70:FF:000031">
    <property type="entry name" value="Glutamate synthase 1 [NADH]"/>
    <property type="match status" value="1"/>
</dbReference>
<dbReference type="FunFam" id="1.10.1060.10:FF:000009">
    <property type="entry name" value="Glutamate synthase 1 [NADH] chloroplastic"/>
    <property type="match status" value="1"/>
</dbReference>
<dbReference type="FunFam" id="3.60.20.10:FF:000043">
    <property type="entry name" value="Glutamate synthase 1 [NADH] chloroplastic"/>
    <property type="match status" value="1"/>
</dbReference>
<dbReference type="FunFam" id="3.20.20.70:FF:000017">
    <property type="entry name" value="Glutamate synthase [NADH], amyloplastic"/>
    <property type="match status" value="1"/>
</dbReference>
<dbReference type="FunFam" id="3.40.50.720:FF:000113">
    <property type="entry name" value="Glutamate synthase [NADH], amyloplastic"/>
    <property type="match status" value="1"/>
</dbReference>
<dbReference type="FunFam" id="3.50.50.60:FF:000022">
    <property type="entry name" value="Glutamate synthase [NADH], amyloplastic"/>
    <property type="match status" value="1"/>
</dbReference>
<dbReference type="FunFam" id="2.160.20.60:FF:000001">
    <property type="entry name" value="Glutamate synthase, large subunit"/>
    <property type="match status" value="1"/>
</dbReference>
<dbReference type="Gene3D" id="3.20.20.70">
    <property type="entry name" value="Aldolase class I"/>
    <property type="match status" value="2"/>
</dbReference>
<dbReference type="Gene3D" id="1.10.1060.10">
    <property type="entry name" value="Alpha-helical ferredoxin"/>
    <property type="match status" value="1"/>
</dbReference>
<dbReference type="Gene3D" id="3.50.50.60">
    <property type="entry name" value="FAD/NAD(P)-binding domain"/>
    <property type="match status" value="1"/>
</dbReference>
<dbReference type="Gene3D" id="2.160.20.60">
    <property type="entry name" value="Glutamate synthase, alpha subunit, C-terminal domain"/>
    <property type="match status" value="1"/>
</dbReference>
<dbReference type="Gene3D" id="3.60.20.10">
    <property type="entry name" value="Glutamine Phosphoribosylpyrophosphate, subunit 1, domain 1"/>
    <property type="match status" value="1"/>
</dbReference>
<dbReference type="Gene3D" id="3.40.50.720">
    <property type="entry name" value="NAD(P)-binding Rossmann-like Domain"/>
    <property type="match status" value="1"/>
</dbReference>
<dbReference type="InterPro" id="IPR013785">
    <property type="entry name" value="Aldolase_TIM"/>
</dbReference>
<dbReference type="InterPro" id="IPR028261">
    <property type="entry name" value="DPD_II"/>
</dbReference>
<dbReference type="InterPro" id="IPR036188">
    <property type="entry name" value="FAD/NAD-bd_sf"/>
</dbReference>
<dbReference type="InterPro" id="IPR023753">
    <property type="entry name" value="FAD/NAD-binding_dom"/>
</dbReference>
<dbReference type="InterPro" id="IPR017932">
    <property type="entry name" value="GATase_2_dom"/>
</dbReference>
<dbReference type="InterPro" id="IPR002489">
    <property type="entry name" value="Glu_synth_asu_C"/>
</dbReference>
<dbReference type="InterPro" id="IPR036485">
    <property type="entry name" value="Glu_synth_asu_C_sf"/>
</dbReference>
<dbReference type="InterPro" id="IPR006982">
    <property type="entry name" value="Glu_synth_centr_N"/>
</dbReference>
<dbReference type="InterPro" id="IPR012220">
    <property type="entry name" value="Glu_synth_euk"/>
</dbReference>
<dbReference type="InterPro" id="IPR002932">
    <property type="entry name" value="Glu_synthdom"/>
</dbReference>
<dbReference type="InterPro" id="IPR006005">
    <property type="entry name" value="Glut_synth_ssu1"/>
</dbReference>
<dbReference type="InterPro" id="IPR051394">
    <property type="entry name" value="Glutamate_Synthase"/>
</dbReference>
<dbReference type="InterPro" id="IPR009051">
    <property type="entry name" value="Helical_ferredxn"/>
</dbReference>
<dbReference type="InterPro" id="IPR029055">
    <property type="entry name" value="Ntn_hydrolases_N"/>
</dbReference>
<dbReference type="NCBIfam" id="TIGR01317">
    <property type="entry name" value="GOGAT_sm_gam"/>
    <property type="match status" value="1"/>
</dbReference>
<dbReference type="NCBIfam" id="NF008730">
    <property type="entry name" value="PRK11750.1"/>
    <property type="match status" value="1"/>
</dbReference>
<dbReference type="PANTHER" id="PTHR43100">
    <property type="entry name" value="GLUTAMATE SYNTHASE [NADPH] SMALL CHAIN"/>
    <property type="match status" value="1"/>
</dbReference>
<dbReference type="PANTHER" id="PTHR43100:SF1">
    <property type="entry name" value="GLUTAMATE SYNTHASE [NADPH] SMALL CHAIN"/>
    <property type="match status" value="1"/>
</dbReference>
<dbReference type="Pfam" id="PF14691">
    <property type="entry name" value="Fer4_20"/>
    <property type="match status" value="1"/>
</dbReference>
<dbReference type="Pfam" id="PF00310">
    <property type="entry name" value="GATase_2"/>
    <property type="match status" value="1"/>
</dbReference>
<dbReference type="Pfam" id="PF04898">
    <property type="entry name" value="Glu_syn_central"/>
    <property type="match status" value="1"/>
</dbReference>
<dbReference type="Pfam" id="PF01645">
    <property type="entry name" value="Glu_synthase"/>
    <property type="match status" value="1"/>
</dbReference>
<dbReference type="Pfam" id="PF01493">
    <property type="entry name" value="GXGXG"/>
    <property type="match status" value="1"/>
</dbReference>
<dbReference type="Pfam" id="PF07992">
    <property type="entry name" value="Pyr_redox_2"/>
    <property type="match status" value="1"/>
</dbReference>
<dbReference type="PIRSF" id="PIRSF000187">
    <property type="entry name" value="GOGAT"/>
    <property type="match status" value="1"/>
</dbReference>
<dbReference type="PRINTS" id="PR00419">
    <property type="entry name" value="ADXRDTASE"/>
</dbReference>
<dbReference type="SUPFAM" id="SSF69336">
    <property type="entry name" value="Alpha subunit of glutamate synthase, C-terminal domain"/>
    <property type="match status" value="1"/>
</dbReference>
<dbReference type="SUPFAM" id="SSF46548">
    <property type="entry name" value="alpha-helical ferredoxin"/>
    <property type="match status" value="1"/>
</dbReference>
<dbReference type="SUPFAM" id="SSF51905">
    <property type="entry name" value="FAD/NAD(P)-binding domain"/>
    <property type="match status" value="1"/>
</dbReference>
<dbReference type="SUPFAM" id="SSF51395">
    <property type="entry name" value="FMN-linked oxidoreductases"/>
    <property type="match status" value="1"/>
</dbReference>
<dbReference type="SUPFAM" id="SSF56235">
    <property type="entry name" value="N-terminal nucleophile aminohydrolases (Ntn hydrolases)"/>
    <property type="match status" value="1"/>
</dbReference>
<dbReference type="PROSITE" id="PS51278">
    <property type="entry name" value="GATASE_TYPE_2"/>
    <property type="match status" value="1"/>
</dbReference>
<protein>
    <recommendedName>
        <fullName>Glutamate synthase 1 [NADH], chloroplastic</fullName>
        <ecNumber>1.4.1.14</ecNumber>
    </recommendedName>
    <alternativeName>
        <fullName>NADH-dependent glutamate synthase 1</fullName>
        <shortName>NADH-GOGAT 1</shortName>
    </alternativeName>
</protein>
<comment type="function">
    <text evidence="6">Involved in glutamate biosynthesis and plays a major role in the primary ammonium ions assimilation in seedling roots. May be involved in the reutilization of glutamine in developing organs. Plays a role in the development of tillers.</text>
</comment>
<comment type="catalytic activity">
    <reaction>
        <text>2 L-glutamate + NAD(+) = L-glutamine + 2-oxoglutarate + NADH + H(+)</text>
        <dbReference type="Rhea" id="RHEA:13753"/>
        <dbReference type="ChEBI" id="CHEBI:15378"/>
        <dbReference type="ChEBI" id="CHEBI:16810"/>
        <dbReference type="ChEBI" id="CHEBI:29985"/>
        <dbReference type="ChEBI" id="CHEBI:57540"/>
        <dbReference type="ChEBI" id="CHEBI:57945"/>
        <dbReference type="ChEBI" id="CHEBI:58359"/>
        <dbReference type="EC" id="1.4.1.14"/>
    </reaction>
</comment>
<comment type="cofactor">
    <cofactor evidence="1">
        <name>[3Fe-4S] cluster</name>
        <dbReference type="ChEBI" id="CHEBI:21137"/>
    </cofactor>
    <text evidence="1">Binds 1 [3Fe-4S] cluster.</text>
</comment>
<comment type="cofactor">
    <cofactor evidence="1">
        <name>FAD</name>
        <dbReference type="ChEBI" id="CHEBI:57692"/>
    </cofactor>
</comment>
<comment type="cofactor">
    <cofactor evidence="1">
        <name>FMN</name>
        <dbReference type="ChEBI" id="CHEBI:58210"/>
    </cofactor>
</comment>
<comment type="pathway">
    <text>Amino-acid biosynthesis; L-glutamate biosynthesis via GLT pathway; L-glutamate from 2-oxoglutarate and L-glutamine (NAD(+) route): step 1/1.</text>
</comment>
<comment type="pathway">
    <text>Energy metabolism; nitrogen metabolism.</text>
</comment>
<comment type="subunit">
    <text evidence="1">Monomer.</text>
</comment>
<comment type="subcellular location">
    <subcellularLocation>
        <location evidence="8">Plastid</location>
        <location evidence="8">Chloroplast</location>
    </subcellularLocation>
</comment>
<comment type="tissue specificity">
    <text evidence="7">Highly expressed in roots.</text>
</comment>
<comment type="induction">
    <text evidence="5">By ammonium supply in roots.</text>
</comment>
<comment type="disruption phenotype">
    <text evidence="6">Inhibition of the main root elongation when grown in presence of ammonium chloride. Reduced plant height, biomass and panicle number.</text>
</comment>
<comment type="similarity">
    <text evidence="9">Belongs to the glutamate synthase family.</text>
</comment>
<feature type="transit peptide" description="Chloroplast" evidence="2">
    <location>
        <begin position="1"/>
        <end position="36"/>
    </location>
</feature>
<feature type="chain" id="PRO_0000395201" description="Glutamate synthase 1 [NADH], chloroplastic">
    <location>
        <begin position="37"/>
        <end position="2167"/>
    </location>
</feature>
<feature type="domain" description="Glutamine amidotransferase type-2" evidence="3">
    <location>
        <begin position="100"/>
        <end position="504"/>
    </location>
</feature>
<feature type="region of interest" description="Disordered" evidence="4">
    <location>
        <begin position="1"/>
        <end position="31"/>
    </location>
</feature>
<feature type="region of interest" description="Disordered" evidence="4">
    <location>
        <begin position="1022"/>
        <end position="1042"/>
    </location>
</feature>
<feature type="active site" description="Nucleophile" evidence="3">
    <location>
        <position position="100"/>
    </location>
</feature>
<feature type="binding site" evidence="1">
    <location>
        <begin position="1192"/>
        <end position="1249"/>
    </location>
    <ligand>
        <name>FMN</name>
        <dbReference type="ChEBI" id="CHEBI:58210"/>
    </ligand>
</feature>
<feature type="binding site" evidence="1">
    <location>
        <position position="1245"/>
    </location>
    <ligand>
        <name>[3Fe-4S] cluster</name>
        <dbReference type="ChEBI" id="CHEBI:21137"/>
    </ligand>
</feature>
<feature type="binding site" evidence="1">
    <location>
        <position position="1251"/>
    </location>
    <ligand>
        <name>[3Fe-4S] cluster</name>
        <dbReference type="ChEBI" id="CHEBI:21137"/>
    </ligand>
</feature>
<feature type="binding site" evidence="1">
    <location>
        <position position="1256"/>
    </location>
    <ligand>
        <name>[3Fe-4S] cluster</name>
        <dbReference type="ChEBI" id="CHEBI:21137"/>
    </ligand>
</feature>
<feature type="binding site" evidence="2">
    <location>
        <begin position="1956"/>
        <end position="1970"/>
    </location>
    <ligand>
        <name>NAD(+)</name>
        <dbReference type="ChEBI" id="CHEBI:57540"/>
    </ligand>
</feature>
<feature type="sequence conflict" description="In Ref. 1; BAA35120." evidence="9" ref="1">
    <location>
        <position position="769"/>
    </location>
</feature>
<feature type="sequence conflict" description="In Ref. 1; BAA35120." evidence="9" ref="1">
    <original>F</original>
    <variation>L</variation>
    <location>
        <position position="2056"/>
    </location>
</feature>
<name>GLT1_ORYSJ</name>
<keyword id="KW-0003">3Fe-4S</keyword>
<keyword id="KW-0028">Amino-acid biosynthesis</keyword>
<keyword id="KW-0150">Chloroplast</keyword>
<keyword id="KW-0274">FAD</keyword>
<keyword id="KW-0285">Flavoprotein</keyword>
<keyword id="KW-0288">FMN</keyword>
<keyword id="KW-0314">Glutamate biosynthesis</keyword>
<keyword id="KW-0315">Glutamine amidotransferase</keyword>
<keyword id="KW-0408">Iron</keyword>
<keyword id="KW-0411">Iron-sulfur</keyword>
<keyword id="KW-0479">Metal-binding</keyword>
<keyword id="KW-0520">NAD</keyword>
<keyword id="KW-0560">Oxidoreductase</keyword>
<keyword id="KW-0934">Plastid</keyword>
<keyword id="KW-1185">Reference proteome</keyword>
<keyword id="KW-0809">Transit peptide</keyword>
<reference key="1">
    <citation type="journal article" date="1998" name="Biochim. Biophys. Acta">
        <title>Organization and structure of NADH-dependent glutamate synthase gene from rice plants.</title>
        <authorList>
            <person name="Goto S."/>
            <person name="Akagawa T."/>
            <person name="Kojima S."/>
            <person name="Hayakawa T."/>
            <person name="Yamaya T."/>
        </authorList>
    </citation>
    <scope>NUCLEOTIDE SEQUENCE [MRNA]</scope>
    <scope>TISSUE SPECIFICITY</scope>
    <source>
        <strain>cv. Sasanishiki</strain>
        <tissue>Root</tissue>
    </source>
</reference>
<reference key="2">
    <citation type="journal article" date="2005" name="Nature">
        <title>The map-based sequence of the rice genome.</title>
        <authorList>
            <consortium name="International rice genome sequencing project (IRGSP)"/>
        </authorList>
    </citation>
    <scope>NUCLEOTIDE SEQUENCE [LARGE SCALE GENOMIC DNA]</scope>
    <source>
        <strain>cv. Nipponbare</strain>
    </source>
</reference>
<reference key="3">
    <citation type="journal article" date="2008" name="Nucleic Acids Res.">
        <title>The rice annotation project database (RAP-DB): 2008 update.</title>
        <authorList>
            <consortium name="The rice annotation project (RAP)"/>
        </authorList>
    </citation>
    <scope>GENOME REANNOTATION</scope>
    <source>
        <strain>cv. Nipponbare</strain>
    </source>
</reference>
<reference key="4">
    <citation type="journal article" date="2013" name="Rice">
        <title>Improvement of the Oryza sativa Nipponbare reference genome using next generation sequence and optical map data.</title>
        <authorList>
            <person name="Kawahara Y."/>
            <person name="de la Bastide M."/>
            <person name="Hamilton J.P."/>
            <person name="Kanamori H."/>
            <person name="McCombie W.R."/>
            <person name="Ouyang S."/>
            <person name="Schwartz D.C."/>
            <person name="Tanaka T."/>
            <person name="Wu J."/>
            <person name="Zhou S."/>
            <person name="Childs K.L."/>
            <person name="Davidson R.M."/>
            <person name="Lin H."/>
            <person name="Quesada-Ocampo L."/>
            <person name="Vaillancourt B."/>
            <person name="Sakai H."/>
            <person name="Lee S.S."/>
            <person name="Kim J."/>
            <person name="Numa H."/>
            <person name="Itoh T."/>
            <person name="Buell C.R."/>
            <person name="Matsumoto T."/>
        </authorList>
    </citation>
    <scope>GENOME REANNOTATION</scope>
    <source>
        <strain>cv. Nipponbare</strain>
    </source>
</reference>
<reference key="5">
    <citation type="journal article" date="1999" name="Plant Physiol.">
        <title>Quantitative intercellular localization of NADH-dependent glutamate synthase protein in different types of root cells in rice plants.</title>
        <authorList>
            <person name="Hayakawa T."/>
            <person name="Hopkins L."/>
            <person name="Peat L.J."/>
            <person name="Yamaya T."/>
            <person name="Tobin A.K."/>
        </authorList>
    </citation>
    <scope>SUBCELLULAR LOCATION</scope>
</reference>
<reference key="6">
    <citation type="journal article" date="2007" name="J. Exp. Bot.">
        <title>Assimilation of ammonium ions and reutilization of nitrogen in rice (Oryza sativa L.).</title>
        <authorList>
            <person name="Tabuchi M."/>
            <person name="Abiko T."/>
            <person name="Yamaya T."/>
        </authorList>
    </citation>
    <scope>INDUCTION</scope>
    <source>
        <strain>cv. Sasanishiki</strain>
        <tissue>Shoot</tissue>
    </source>
</reference>
<reference key="7">
    <citation type="journal article" date="2010" name="Amino Acids">
        <title>Reverse genetics approach to characterize a function of NADH-glutamate synthase1 in rice plants.</title>
        <authorList>
            <person name="Tamura W."/>
            <person name="Hidaka Y."/>
            <person name="Tabuchi M."/>
            <person name="Kojima S."/>
            <person name="Hayakawa T."/>
            <person name="Sato T."/>
            <person name="Obara M."/>
            <person name="Kojima M."/>
            <person name="Sakakibara H."/>
            <person name="Yamaya T."/>
        </authorList>
    </citation>
    <scope>FUNCTION</scope>
    <scope>DISRUPTION PHENOTYPE</scope>
</reference>
<gene>
    <name type="ordered locus">Os01g0681900</name>
    <name type="ordered locus">LOC_Os01g48960</name>
</gene>
<accession>Q0JKD0</accession>
<accession>Q9ZNX7</accession>
<organism>
    <name type="scientific">Oryza sativa subsp. japonica</name>
    <name type="common">Rice</name>
    <dbReference type="NCBI Taxonomy" id="39947"/>
    <lineage>
        <taxon>Eukaryota</taxon>
        <taxon>Viridiplantae</taxon>
        <taxon>Streptophyta</taxon>
        <taxon>Embryophyta</taxon>
        <taxon>Tracheophyta</taxon>
        <taxon>Spermatophyta</taxon>
        <taxon>Magnoliopsida</taxon>
        <taxon>Liliopsida</taxon>
        <taxon>Poales</taxon>
        <taxon>Poaceae</taxon>
        <taxon>BOP clade</taxon>
        <taxon>Oryzoideae</taxon>
        <taxon>Oryzeae</taxon>
        <taxon>Oryzinae</taxon>
        <taxon>Oryza</taxon>
        <taxon>Oryza sativa</taxon>
    </lineage>
</organism>
<sequence>MSAAQGMAYKLRTDAAPTGAGRRARRSHSSVAAPYRAARLVQGGVSIEGGLVGGCQLTEERVAARPPRAAARDAEPVRPLSTLPESSIGLYDPSRERDSCGVGFVAELSGDYKRATVNDALEMLERMAHRGACGCEKNTGDGAGILVALPHNFFREVTKDAGFELPQPGEYAVGMVFLPIDEKRRERSKAEFQKVAESLGHVILGWRRVPTDNSDLGESALQTEPVIEQVFLTKSSSSEADFEQQLYILRRLSILSIRAALNLRRGGKRDFYMCSLSSRTIVYKGQLKPCQLKGYYYADLGHENFTSYMALVHSRFSTNTFPSWDRAQPMRVLGHNGEINTLKGNKNWMKAREGLLECEKLGLTKDQFSKILPIVDATSSDSGAFDGVLELLIRGGRSLPEAVMMMIPEAWQNDVNMEPEKKALYEFLSALMEPWDGPALISFTDGRYLGATLDRNGLRPGRFYVTHSGRVVMGSEVGVVDVPSKDVLRKGRLNPGMMLLVDFENHTVVDDEALKAQYSKAHPYGEWLKRQKIYLKDIVESVPETERVAPGISGSLTQKNEKKEHAGVNGIVTPLKAFGYTVEALEMLLLPMAKDGVEALGSMGNDTPLAVMSNREKLTFEYFKQMFAQVTNPPIDPIREKIVTSMECMIGPEGDLLETTEKQCNRLALEGPLVSIDEMEAIKKMNYRGWRSKVLDITYPKKSGRKGLEETLDRICTEARGAIKKGYTVLVLSDRGFSSDRVAVSSLLAVGAVHQHLVANLERTRVGLLVESAEPREVHHFCTLVGFGADAVCPYLAIEAIWCLQNDGKIPPNGDGKPYSKEELVKKYFYASNYGMMKVLAKMGISTLASYKGAQIFEALGLSSEVIRKCFDGTPSRIEGATFEMLARDALRLHELAFPSRAPPPGSADAKALPNPGDYHWRKNGEVHLNDPLAMAKLQEAARVNSRAAYKEYSRRIQELNKTCNLRGMLKFKDTADMISVDEVEPASEIVKRFVTGAMSYGSISLEAHTALAMAMNKLGGKSNTGEGGEQPSRMEPLANGSMNPKRSAIKQVASGRFGVSSYYLTNADELQIKMAQGAKPGEGGELPGHKVIGDIAVTRHSTAGVGLISPPPHHDIYSIEDLAQLIHDLKNSNPRARISVKLVSEAGVGVVASGVVKGHADHVLISGHDGGTGASRWTGIKNAGLPWELGLAETHQTLVANGLRGRAILQTDGQLKTGKDVAVACLLGAEEFGFSTAPLITLGCIMMRKCHTNTCPVGIATQDPVLREKFAGEPEHVINFFFMLAEELREIMSQLGFRTITEMVGRSDMLEVDPEVVKSNEKLENIDLSLILKPAAEIRPGAAQYCVEKQDHGLDMALDNKLIALSKAALEKEVRVFIETPIQNTNRAVGTMLSHEVTKRYHMKGLPAGTIHVKLTGSAGQSLGAFLCPGITLELEGDSNDYVGKGLSGGKIVVYPPRDSTFIPEDNIVIGNVALYGATIGEAYFNGMAAERFCVRNSGAQAVVEGIGDHGCEYMTGGTVVILGKTGRNFAAGMSGGIAYVYDIDGKFSVRCNHELVDLYHVEEEEDITTLKMMIEQHRLNTGSVVARDILSNFDTLLPKFVKVFPRDYKRVLDNMKAEKAAAKLAKEPKISNGVSVTTKKVQPEQSTNRPTRVSNAKKYRGFISYERESISYRDPNERVKDWKEVAIESVPGPLLNTQSARCMDCGTPFCHQESSGAGCPLGNKIPEFNELVHQNRWREALDRLLETNNFPEFTGRVCPAPCEGSCVLGIIENPVSIKSIECAIIDKGFEEGWMVPRPPLQRTGKKVAIIGSGPAGLAAADQLNKMGHFVTVFERADRIGGLMMYGVPNMKTDKIEIVQRRVNLMAEEGITFVVNANVGSDPLYSIERLRSENDAVILACGATKPRDLGIPGRELSGVHFAMEFLHANTKSLLDSNLEDGRYISAKGKKVVVIGGGDTGTDCIGTSIRHGCTSIVNLELLTKPPSKRAADNPWPQWPRIFRVDYGHQEASSKFGNDPRTYEVLTKRFIGDENGNVKALEVVRVKWEKVDGRFQFKEIEGSNETIEADLVLLAMGFLGPEATIAEKLGLEKDNRSNFKAQFGNFATSVDGIFAAGDCRRGQSLVVWAITEGRQAAAAVDKYLSRNEQDAAEDITPSGAGFVQPVAA</sequence>